<sequence length="917" mass="102692">MAYHGRGDGYDGHQLQDLPGGHNQGDQHDDAQAPFLSENPMPYDNDRLGTDTPPVRPVSAYSLTESYAPGAGTTRAGVAVNPTPPPHGGYGGGGVSSGVDQGYNYGGDYATDPAYRMSAIDEDDSWLRRQQPNAAPTGGLKRYATRKVKLVQGSVLSLDYPVPSAIRNAVQPKYRDEEGNNEEFFKMRYTAATCDPNDFTLKNGYDLRPRMYNRHTELLIAITYYNEDKVLLSRTLHSVMTNIRDIVNLKKSSFWNRGGPAWQKIVVCLVFDGLDKTDKNVLDVLATIGVYQDGVIKKDVDGKETVAHIFEYTSQLSVTPNQALIRPVDDGPQTLPPVQFIFCLKQKNTKKINSHRWLFNAFGRILNPEVCILLDAGTKPSPRSLLALWEGFYNDKDLGGACGEIHAMLGKGGKKLLNPLVAVQNFEYKISNILDKPLESAFGYVSVLPGAFSAYRFRAIMGRPLEQYFHGDHTLSKLLGKKGIEGMNIFKKNMFLAEDRILCFELVAKAGQKWHLSYIKAAKGETDVPEGAPEFISQRRRWLNGSFAASLYSLMHFGRMYKSGHNIVRMFFFHVQLIYNIANVIFTWFSLASYWLTTTVIMDLVGTPVTASSSSAEHHGWPFGDTVTPFFNAVLKYIYLAFVILQFILALGNRPKGSKWTYITSFFVFSLIQSYILVLSGYLVARAFSVPLDQQLQLDNAKDAMASLFGGSGSAGVILVALVTIYGLYFLASFMYLDPWHMFHSFPYYMLLMSTYINILMIYAFNNWHDVSWGTKGSDKAEALPSANVSKGEKDEAVVEEIEKPQEDIDQQFEATVRRALAPYKEDETPEPKDLEDSYKSFRTMLVVSWLFSNCLLAVVITSDNFNTFGIGQTASARTAWFFKFLLFATGALSVIRFIGFCWFLGRTGIMCCFARR</sequence>
<gene>
    <name type="primary">chs-1</name>
    <name type="ORF">B11H24.170</name>
    <name type="ORF">NCU03611</name>
</gene>
<organism>
    <name type="scientific">Neurospora crassa (strain ATCC 24698 / 74-OR23-1A / CBS 708.71 / DSM 1257 / FGSC 987)</name>
    <dbReference type="NCBI Taxonomy" id="367110"/>
    <lineage>
        <taxon>Eukaryota</taxon>
        <taxon>Fungi</taxon>
        <taxon>Dikarya</taxon>
        <taxon>Ascomycota</taxon>
        <taxon>Pezizomycotina</taxon>
        <taxon>Sordariomycetes</taxon>
        <taxon>Sordariomycetidae</taxon>
        <taxon>Sordariales</taxon>
        <taxon>Sordariaceae</taxon>
        <taxon>Neurospora</taxon>
    </lineage>
</organism>
<evidence type="ECO:0000255" key="1"/>
<evidence type="ECO:0000256" key="2">
    <source>
        <dbReference type="SAM" id="MobiDB-lite"/>
    </source>
</evidence>
<evidence type="ECO:0000269" key="3">
    <source>
    </source>
</evidence>
<evidence type="ECO:0000305" key="4"/>
<name>CHS1_NEUCR</name>
<proteinExistence type="inferred from homology"/>
<keyword id="KW-1003">Cell membrane</keyword>
<keyword id="KW-0961">Cell wall biogenesis/degradation</keyword>
<keyword id="KW-0325">Glycoprotein</keyword>
<keyword id="KW-0328">Glycosyltransferase</keyword>
<keyword id="KW-0472">Membrane</keyword>
<keyword id="KW-1185">Reference proteome</keyword>
<keyword id="KW-0808">Transferase</keyword>
<keyword id="KW-0812">Transmembrane</keyword>
<keyword id="KW-1133">Transmembrane helix</keyword>
<feature type="chain" id="PRO_0000193701" description="Chitin synthase 1">
    <location>
        <begin position="1"/>
        <end position="917"/>
    </location>
</feature>
<feature type="topological domain" description="Extracellular" evidence="1">
    <location>
        <begin position="1"/>
        <end position="570"/>
    </location>
</feature>
<feature type="transmembrane region" description="Helical" evidence="1">
    <location>
        <begin position="571"/>
        <end position="591"/>
    </location>
</feature>
<feature type="topological domain" description="Cytoplasmic" evidence="1">
    <location>
        <begin position="592"/>
        <end position="629"/>
    </location>
</feature>
<feature type="transmembrane region" description="Helical" evidence="1">
    <location>
        <begin position="630"/>
        <end position="650"/>
    </location>
</feature>
<feature type="topological domain" description="Extracellular" evidence="1">
    <location>
        <begin position="651"/>
        <end position="664"/>
    </location>
</feature>
<feature type="transmembrane region" description="Helical" evidence="1">
    <location>
        <begin position="665"/>
        <end position="685"/>
    </location>
</feature>
<feature type="topological domain" description="Cytoplasmic" evidence="1">
    <location>
        <begin position="686"/>
        <end position="716"/>
    </location>
</feature>
<feature type="transmembrane region" description="Helical" evidence="1">
    <location>
        <begin position="717"/>
        <end position="737"/>
    </location>
</feature>
<feature type="topological domain" description="Extracellular" evidence="1">
    <location>
        <begin position="738"/>
        <end position="744"/>
    </location>
</feature>
<feature type="transmembrane region" description="Helical" evidence="1">
    <location>
        <begin position="745"/>
        <end position="765"/>
    </location>
</feature>
<feature type="topological domain" description="Cytoplasmic" evidence="1">
    <location>
        <begin position="766"/>
        <end position="843"/>
    </location>
</feature>
<feature type="transmembrane region" description="Helical" evidence="1">
    <location>
        <begin position="844"/>
        <end position="864"/>
    </location>
</feature>
<feature type="topological domain" description="Extracellular" evidence="1">
    <location>
        <begin position="865"/>
        <end position="884"/>
    </location>
</feature>
<feature type="transmembrane region" description="Helical" evidence="1">
    <location>
        <begin position="885"/>
        <end position="905"/>
    </location>
</feature>
<feature type="topological domain" description="Cytoplasmic" evidence="1">
    <location>
        <begin position="906"/>
        <end position="917"/>
    </location>
</feature>
<feature type="region of interest" description="Disordered" evidence="2">
    <location>
        <begin position="1"/>
        <end position="56"/>
    </location>
</feature>
<feature type="compositionally biased region" description="Basic and acidic residues" evidence="2">
    <location>
        <begin position="1"/>
        <end position="11"/>
    </location>
</feature>
<feature type="glycosylation site" description="N-linked (GlcNAc...) asparagine" evidence="1">
    <location>
        <position position="544"/>
    </location>
</feature>
<feature type="sequence conflict" description="In Ref. 1; AAA33568." evidence="4" ref="1">
    <original>A</original>
    <variation>R</variation>
    <location>
        <position position="33"/>
    </location>
</feature>
<reference key="1">
    <citation type="journal article" date="1991" name="Genes Dev.">
        <title>Chitin synthase 1 plays a major role in cell wall biogenesis in Neurospora crassa.</title>
        <authorList>
            <person name="Yarden O."/>
            <person name="Yanofsky C."/>
        </authorList>
    </citation>
    <scope>NUCLEOTIDE SEQUENCE [GENOMIC DNA]</scope>
    <scope>FUNCTION</scope>
</reference>
<reference key="2">
    <citation type="journal article" date="2003" name="Nucleic Acids Res.">
        <title>What's in the genome of a filamentous fungus? Analysis of the Neurospora genome sequence.</title>
        <authorList>
            <person name="Mannhaupt G."/>
            <person name="Montrone C."/>
            <person name="Haase D."/>
            <person name="Mewes H.-W."/>
            <person name="Aign V."/>
            <person name="Hoheisel J.D."/>
            <person name="Fartmann B."/>
            <person name="Nyakatura G."/>
            <person name="Kempken F."/>
            <person name="Maier J."/>
            <person name="Schulte U."/>
        </authorList>
    </citation>
    <scope>NUCLEOTIDE SEQUENCE [LARGE SCALE GENOMIC DNA]</scope>
    <source>
        <strain>ATCC 24698 / 74-OR23-1A / CBS 708.71 / DSM 1257 / FGSC 987</strain>
    </source>
</reference>
<reference key="3">
    <citation type="journal article" date="2003" name="Nature">
        <title>The genome sequence of the filamentous fungus Neurospora crassa.</title>
        <authorList>
            <person name="Galagan J.E."/>
            <person name="Calvo S.E."/>
            <person name="Borkovich K.A."/>
            <person name="Selker E.U."/>
            <person name="Read N.D."/>
            <person name="Jaffe D.B."/>
            <person name="FitzHugh W."/>
            <person name="Ma L.-J."/>
            <person name="Smirnov S."/>
            <person name="Purcell S."/>
            <person name="Rehman B."/>
            <person name="Elkins T."/>
            <person name="Engels R."/>
            <person name="Wang S."/>
            <person name="Nielsen C.B."/>
            <person name="Butler J."/>
            <person name="Endrizzi M."/>
            <person name="Qui D."/>
            <person name="Ianakiev P."/>
            <person name="Bell-Pedersen D."/>
            <person name="Nelson M.A."/>
            <person name="Werner-Washburne M."/>
            <person name="Selitrennikoff C.P."/>
            <person name="Kinsey J.A."/>
            <person name="Braun E.L."/>
            <person name="Zelter A."/>
            <person name="Schulte U."/>
            <person name="Kothe G.O."/>
            <person name="Jedd G."/>
            <person name="Mewes H.-W."/>
            <person name="Staben C."/>
            <person name="Marcotte E."/>
            <person name="Greenberg D."/>
            <person name="Roy A."/>
            <person name="Foley K."/>
            <person name="Naylor J."/>
            <person name="Stange-Thomann N."/>
            <person name="Barrett R."/>
            <person name="Gnerre S."/>
            <person name="Kamal M."/>
            <person name="Kamvysselis M."/>
            <person name="Mauceli E.W."/>
            <person name="Bielke C."/>
            <person name="Rudd S."/>
            <person name="Frishman D."/>
            <person name="Krystofova S."/>
            <person name="Rasmussen C."/>
            <person name="Metzenberg R.L."/>
            <person name="Perkins D.D."/>
            <person name="Kroken S."/>
            <person name="Cogoni C."/>
            <person name="Macino G."/>
            <person name="Catcheside D.E.A."/>
            <person name="Li W."/>
            <person name="Pratt R.J."/>
            <person name="Osmani S.A."/>
            <person name="DeSouza C.P.C."/>
            <person name="Glass N.L."/>
            <person name="Orbach M.J."/>
            <person name="Berglund J.A."/>
            <person name="Voelker R."/>
            <person name="Yarden O."/>
            <person name="Plamann M."/>
            <person name="Seiler S."/>
            <person name="Dunlap J.C."/>
            <person name="Radford A."/>
            <person name="Aramayo R."/>
            <person name="Natvig D.O."/>
            <person name="Alex L.A."/>
            <person name="Mannhaupt G."/>
            <person name="Ebbole D.J."/>
            <person name="Freitag M."/>
            <person name="Paulsen I."/>
            <person name="Sachs M.S."/>
            <person name="Lander E.S."/>
            <person name="Nusbaum C."/>
            <person name="Birren B.W."/>
        </authorList>
    </citation>
    <scope>NUCLEOTIDE SEQUENCE [LARGE SCALE GENOMIC DNA]</scope>
    <source>
        <strain>ATCC 24698 / 74-OR23-1A / CBS 708.71 / DSM 1257 / FGSC 987</strain>
    </source>
</reference>
<accession>P29070</accession>
<accession>Q7RVD4</accession>
<accession>Q8X0I7</accession>
<protein>
    <recommendedName>
        <fullName>Chitin synthase 1</fullName>
        <ecNumber>2.4.1.16</ecNumber>
    </recommendedName>
    <alternativeName>
        <fullName>Chitin-UDP acetyl-glucosaminyl transferase 1</fullName>
    </alternativeName>
    <alternativeName>
        <fullName>Class-III chitin synthase 3</fullName>
    </alternativeName>
</protein>
<comment type="function">
    <text evidence="3">Polymerizes chitin, a structural polymer of the cell wall and septum, by transferring the sugar moiety of UDP-GlcNAc to the non-reducing end of the growing chitin polymer.</text>
</comment>
<comment type="catalytic activity">
    <reaction>
        <text>[(1-&gt;4)-N-acetyl-beta-D-glucosaminyl](n) + UDP-N-acetyl-alpha-D-glucosamine = [(1-&gt;4)-N-acetyl-beta-D-glucosaminyl](n+1) + UDP + H(+)</text>
        <dbReference type="Rhea" id="RHEA:16637"/>
        <dbReference type="Rhea" id="RHEA-COMP:9593"/>
        <dbReference type="Rhea" id="RHEA-COMP:9595"/>
        <dbReference type="ChEBI" id="CHEBI:15378"/>
        <dbReference type="ChEBI" id="CHEBI:17029"/>
        <dbReference type="ChEBI" id="CHEBI:57705"/>
        <dbReference type="ChEBI" id="CHEBI:58223"/>
        <dbReference type="EC" id="2.4.1.16"/>
    </reaction>
</comment>
<comment type="subcellular location">
    <subcellularLocation>
        <location evidence="4">Cell membrane</location>
        <topology evidence="1">Multi-pass membrane protein</topology>
    </subcellularLocation>
</comment>
<comment type="similarity">
    <text evidence="4">Belongs to the chitin synthase family. Class III subfamily.</text>
</comment>
<comment type="sequence caution" evidence="4">
    <conflict type="frameshift">
        <sequence resource="EMBL-CDS" id="AAA33568"/>
    </conflict>
</comment>
<dbReference type="EC" id="2.4.1.16"/>
<dbReference type="EMBL" id="M73437">
    <property type="protein sequence ID" value="AAA33568.1"/>
    <property type="status" value="ALT_FRAME"/>
    <property type="molecule type" value="Genomic_DNA"/>
</dbReference>
<dbReference type="EMBL" id="AL670005">
    <property type="protein sequence ID" value="CAD21286.1"/>
    <property type="molecule type" value="Genomic_DNA"/>
</dbReference>
<dbReference type="EMBL" id="CM002240">
    <property type="protein sequence ID" value="EAA32102.2"/>
    <property type="molecule type" value="Genomic_DNA"/>
</dbReference>
<dbReference type="PIR" id="A41638">
    <property type="entry name" value="A41638"/>
</dbReference>
<dbReference type="RefSeq" id="XP_961338.2">
    <property type="nucleotide sequence ID" value="XM_956245.3"/>
</dbReference>
<dbReference type="SMR" id="P29070"/>
<dbReference type="STRING" id="367110.P29070"/>
<dbReference type="ChEMBL" id="CHEMBL5625"/>
<dbReference type="CAZy" id="GT2">
    <property type="family name" value="Glycosyltransferase Family 2"/>
</dbReference>
<dbReference type="GlyCosmos" id="P29070">
    <property type="glycosylation" value="1 site, No reported glycans"/>
</dbReference>
<dbReference type="PaxDb" id="5141-EFNCRP00000003325"/>
<dbReference type="EnsemblFungi" id="EAA32102">
    <property type="protein sequence ID" value="EAA32102"/>
    <property type="gene ID" value="NCU03611"/>
</dbReference>
<dbReference type="GeneID" id="3877520"/>
<dbReference type="KEGG" id="ncr:NCU03611"/>
<dbReference type="VEuPathDB" id="FungiDB:NCU03611"/>
<dbReference type="HOGENOM" id="CLU_004760_0_1_1"/>
<dbReference type="InParanoid" id="P29070"/>
<dbReference type="OMA" id="WHLTYIK"/>
<dbReference type="OrthoDB" id="26569at2759"/>
<dbReference type="BRENDA" id="2.4.1.16">
    <property type="organism ID" value="3627"/>
</dbReference>
<dbReference type="PRO" id="PR:P29070"/>
<dbReference type="Proteomes" id="UP000001805">
    <property type="component" value="Chromosome 2, Linkage Group V"/>
</dbReference>
<dbReference type="GO" id="GO:0071944">
    <property type="term" value="C:cell periphery"/>
    <property type="evidence" value="ECO:0000318"/>
    <property type="project" value="GO_Central"/>
</dbReference>
<dbReference type="GO" id="GO:0030428">
    <property type="term" value="C:cell septum"/>
    <property type="evidence" value="ECO:0000318"/>
    <property type="project" value="GO_Central"/>
</dbReference>
<dbReference type="GO" id="GO:0005886">
    <property type="term" value="C:plasma membrane"/>
    <property type="evidence" value="ECO:0007669"/>
    <property type="project" value="UniProtKB-SubCell"/>
</dbReference>
<dbReference type="GO" id="GO:0004100">
    <property type="term" value="F:chitin synthase activity"/>
    <property type="evidence" value="ECO:0000318"/>
    <property type="project" value="GO_Central"/>
</dbReference>
<dbReference type="GO" id="GO:0071555">
    <property type="term" value="P:cell wall organization"/>
    <property type="evidence" value="ECO:0007669"/>
    <property type="project" value="UniProtKB-KW"/>
</dbReference>
<dbReference type="GO" id="GO:0006031">
    <property type="term" value="P:chitin biosynthetic process"/>
    <property type="evidence" value="ECO:0000318"/>
    <property type="project" value="GO_Central"/>
</dbReference>
<dbReference type="CDD" id="cd04190">
    <property type="entry name" value="Chitin_synth_C"/>
    <property type="match status" value="1"/>
</dbReference>
<dbReference type="InterPro" id="IPR004835">
    <property type="entry name" value="Chitin_synth"/>
</dbReference>
<dbReference type="InterPro" id="IPR004834">
    <property type="entry name" value="Chitin_synth_fun"/>
</dbReference>
<dbReference type="InterPro" id="IPR013616">
    <property type="entry name" value="Chitin_synth_N"/>
</dbReference>
<dbReference type="InterPro" id="IPR029044">
    <property type="entry name" value="Nucleotide-diphossugar_trans"/>
</dbReference>
<dbReference type="PANTHER" id="PTHR22914">
    <property type="entry name" value="CHITIN SYNTHASE"/>
    <property type="match status" value="1"/>
</dbReference>
<dbReference type="PANTHER" id="PTHR22914:SF11">
    <property type="entry name" value="CHITIN SYNTHASE B"/>
    <property type="match status" value="1"/>
</dbReference>
<dbReference type="Pfam" id="PF01644">
    <property type="entry name" value="Chitin_synth_1"/>
    <property type="match status" value="1"/>
</dbReference>
<dbReference type="Pfam" id="PF08407">
    <property type="entry name" value="Chitin_synth_1N"/>
    <property type="match status" value="1"/>
</dbReference>
<dbReference type="SUPFAM" id="SSF53448">
    <property type="entry name" value="Nucleotide-diphospho-sugar transferases"/>
    <property type="match status" value="1"/>
</dbReference>